<comment type="function">
    <text evidence="1">ATPase subunit of a proteasome-like degradation complex; this subunit has chaperone activity. The binding of ATP and its subsequent hydrolysis by HslU are essential for unfolding of protein substrates subsequently hydrolyzed by HslV. HslU recognizes the N-terminal part of its protein substrates and unfolds these before they are guided to HslV for hydrolysis.</text>
</comment>
<comment type="subunit">
    <text evidence="1">A double ring-shaped homohexamer of HslV is capped on each side by a ring-shaped HslU homohexamer. The assembly of the HslU/HslV complex is dependent on binding of ATP.</text>
</comment>
<comment type="subcellular location">
    <subcellularLocation>
        <location evidence="1">Cytoplasm</location>
    </subcellularLocation>
</comment>
<comment type="similarity">
    <text evidence="1">Belongs to the ClpX chaperone family. HslU subfamily.</text>
</comment>
<gene>
    <name evidence="1" type="primary">hslU</name>
    <name type="ordered locus">Bcenmc03_3109</name>
</gene>
<dbReference type="EMBL" id="CP000958">
    <property type="protein sequence ID" value="ACA92267.1"/>
    <property type="molecule type" value="Genomic_DNA"/>
</dbReference>
<dbReference type="RefSeq" id="WP_006477496.1">
    <property type="nucleotide sequence ID" value="NC_010508.1"/>
</dbReference>
<dbReference type="SMR" id="B1K0G2"/>
<dbReference type="GeneID" id="83049889"/>
<dbReference type="KEGG" id="bcm:Bcenmc03_3109"/>
<dbReference type="HOGENOM" id="CLU_033123_0_0_4"/>
<dbReference type="Proteomes" id="UP000002169">
    <property type="component" value="Chromosome 1"/>
</dbReference>
<dbReference type="GO" id="GO:0009376">
    <property type="term" value="C:HslUV protease complex"/>
    <property type="evidence" value="ECO:0007669"/>
    <property type="project" value="UniProtKB-UniRule"/>
</dbReference>
<dbReference type="GO" id="GO:0005524">
    <property type="term" value="F:ATP binding"/>
    <property type="evidence" value="ECO:0007669"/>
    <property type="project" value="UniProtKB-UniRule"/>
</dbReference>
<dbReference type="GO" id="GO:0016887">
    <property type="term" value="F:ATP hydrolysis activity"/>
    <property type="evidence" value="ECO:0007669"/>
    <property type="project" value="InterPro"/>
</dbReference>
<dbReference type="GO" id="GO:0008233">
    <property type="term" value="F:peptidase activity"/>
    <property type="evidence" value="ECO:0007669"/>
    <property type="project" value="InterPro"/>
</dbReference>
<dbReference type="GO" id="GO:0036402">
    <property type="term" value="F:proteasome-activating activity"/>
    <property type="evidence" value="ECO:0007669"/>
    <property type="project" value="UniProtKB-UniRule"/>
</dbReference>
<dbReference type="GO" id="GO:0043335">
    <property type="term" value="P:protein unfolding"/>
    <property type="evidence" value="ECO:0007669"/>
    <property type="project" value="UniProtKB-UniRule"/>
</dbReference>
<dbReference type="GO" id="GO:0051603">
    <property type="term" value="P:proteolysis involved in protein catabolic process"/>
    <property type="evidence" value="ECO:0007669"/>
    <property type="project" value="TreeGrafter"/>
</dbReference>
<dbReference type="CDD" id="cd19498">
    <property type="entry name" value="RecA-like_HslU"/>
    <property type="match status" value="1"/>
</dbReference>
<dbReference type="FunFam" id="3.40.50.300:FF:000213">
    <property type="entry name" value="ATP-dependent protease ATPase subunit HslU"/>
    <property type="match status" value="1"/>
</dbReference>
<dbReference type="FunFam" id="3.40.50.300:FF:000220">
    <property type="entry name" value="ATP-dependent protease ATPase subunit HslU"/>
    <property type="match status" value="1"/>
</dbReference>
<dbReference type="Gene3D" id="1.10.8.60">
    <property type="match status" value="1"/>
</dbReference>
<dbReference type="Gene3D" id="3.40.50.300">
    <property type="entry name" value="P-loop containing nucleotide triphosphate hydrolases"/>
    <property type="match status" value="2"/>
</dbReference>
<dbReference type="HAMAP" id="MF_00249">
    <property type="entry name" value="HslU"/>
    <property type="match status" value="1"/>
</dbReference>
<dbReference type="InterPro" id="IPR003593">
    <property type="entry name" value="AAA+_ATPase"/>
</dbReference>
<dbReference type="InterPro" id="IPR050052">
    <property type="entry name" value="ATP-dep_Clp_protease_ClpX"/>
</dbReference>
<dbReference type="InterPro" id="IPR003959">
    <property type="entry name" value="ATPase_AAA_core"/>
</dbReference>
<dbReference type="InterPro" id="IPR019489">
    <property type="entry name" value="Clp_ATPase_C"/>
</dbReference>
<dbReference type="InterPro" id="IPR004491">
    <property type="entry name" value="HslU"/>
</dbReference>
<dbReference type="InterPro" id="IPR027417">
    <property type="entry name" value="P-loop_NTPase"/>
</dbReference>
<dbReference type="NCBIfam" id="TIGR00390">
    <property type="entry name" value="hslU"/>
    <property type="match status" value="1"/>
</dbReference>
<dbReference type="NCBIfam" id="NF003544">
    <property type="entry name" value="PRK05201.1"/>
    <property type="match status" value="1"/>
</dbReference>
<dbReference type="PANTHER" id="PTHR48102">
    <property type="entry name" value="ATP-DEPENDENT CLP PROTEASE ATP-BINDING SUBUNIT CLPX-LIKE, MITOCHONDRIAL-RELATED"/>
    <property type="match status" value="1"/>
</dbReference>
<dbReference type="PANTHER" id="PTHR48102:SF3">
    <property type="entry name" value="ATP-DEPENDENT PROTEASE ATPASE SUBUNIT HSLU"/>
    <property type="match status" value="1"/>
</dbReference>
<dbReference type="Pfam" id="PF00004">
    <property type="entry name" value="AAA"/>
    <property type="match status" value="1"/>
</dbReference>
<dbReference type="Pfam" id="PF07724">
    <property type="entry name" value="AAA_2"/>
    <property type="match status" value="1"/>
</dbReference>
<dbReference type="SMART" id="SM00382">
    <property type="entry name" value="AAA"/>
    <property type="match status" value="1"/>
</dbReference>
<dbReference type="SMART" id="SM01086">
    <property type="entry name" value="ClpB_D2-small"/>
    <property type="match status" value="1"/>
</dbReference>
<dbReference type="SUPFAM" id="SSF52540">
    <property type="entry name" value="P-loop containing nucleoside triphosphate hydrolases"/>
    <property type="match status" value="1"/>
</dbReference>
<keyword id="KW-0067">ATP-binding</keyword>
<keyword id="KW-0143">Chaperone</keyword>
<keyword id="KW-0963">Cytoplasm</keyword>
<keyword id="KW-0547">Nucleotide-binding</keyword>
<keyword id="KW-0346">Stress response</keyword>
<proteinExistence type="inferred from homology"/>
<reference key="1">
    <citation type="submission" date="2008-02" db="EMBL/GenBank/DDBJ databases">
        <title>Complete sequence of chromosome 1 of Burkholderia cenocepacia MC0-3.</title>
        <authorList>
            <person name="Copeland A."/>
            <person name="Lucas S."/>
            <person name="Lapidus A."/>
            <person name="Barry K."/>
            <person name="Bruce D."/>
            <person name="Goodwin L."/>
            <person name="Glavina del Rio T."/>
            <person name="Dalin E."/>
            <person name="Tice H."/>
            <person name="Pitluck S."/>
            <person name="Chain P."/>
            <person name="Malfatti S."/>
            <person name="Shin M."/>
            <person name="Vergez L."/>
            <person name="Schmutz J."/>
            <person name="Larimer F."/>
            <person name="Land M."/>
            <person name="Hauser L."/>
            <person name="Kyrpides N."/>
            <person name="Mikhailova N."/>
            <person name="Tiedje J."/>
            <person name="Richardson P."/>
        </authorList>
    </citation>
    <scope>NUCLEOTIDE SEQUENCE [LARGE SCALE GENOMIC DNA]</scope>
    <source>
        <strain>MC0-3</strain>
    </source>
</reference>
<accession>B1K0G2</accession>
<name>HSLU_BURO0</name>
<sequence length="447" mass="49818">MSTMTPAEIVSELDKHIIGQAKAKKAVAVALRNRWRRQQVAEPLRQEITPKNILMIGPTGVGKTEIARRLAKLADAPFIKIEATKFTEVGYVGRDVDSIVRDLIEISVKQTREAEMRKVRSKATDQAEDRILDILLPQPRAVGFGGNAEHANDDNNATRQTFRKRLREGQLDDKEVELDLEQPSVGMDIMAPPGMEEMTEQIRSMFSNLGSGKKQRRKVKIKEALKLLTDEEAAKMLNEEEVKTKAVQNVEQNGIVFLDEIDKITSRNNEGSGGEVSRQGVQRDLLPLVEGTTVNTKYGMVKTDHILFIASGAFHLAKPSDLIPELQGRFPIRVELDSLSVEDFEAILDATDASLVKQYQALLATEDVQLEFAADGIRRLAEIAFAVNEKTENIGARRLYTVIEKLLEEVSFSAGNHAGERVTIDAKYVDRALGEVAQDEDLSRYVL</sequence>
<organism>
    <name type="scientific">Burkholderia orbicola (strain MC0-3)</name>
    <dbReference type="NCBI Taxonomy" id="406425"/>
    <lineage>
        <taxon>Bacteria</taxon>
        <taxon>Pseudomonadati</taxon>
        <taxon>Pseudomonadota</taxon>
        <taxon>Betaproteobacteria</taxon>
        <taxon>Burkholderiales</taxon>
        <taxon>Burkholderiaceae</taxon>
        <taxon>Burkholderia</taxon>
        <taxon>Burkholderia cepacia complex</taxon>
        <taxon>Burkholderia orbicola</taxon>
    </lineage>
</organism>
<feature type="chain" id="PRO_1000100939" description="ATP-dependent protease ATPase subunit HslU">
    <location>
        <begin position="1"/>
        <end position="447"/>
    </location>
</feature>
<feature type="binding site" evidence="1">
    <location>
        <position position="18"/>
    </location>
    <ligand>
        <name>ATP</name>
        <dbReference type="ChEBI" id="CHEBI:30616"/>
    </ligand>
</feature>
<feature type="binding site" evidence="1">
    <location>
        <begin position="60"/>
        <end position="65"/>
    </location>
    <ligand>
        <name>ATP</name>
        <dbReference type="ChEBI" id="CHEBI:30616"/>
    </ligand>
</feature>
<feature type="binding site" evidence="1">
    <location>
        <position position="259"/>
    </location>
    <ligand>
        <name>ATP</name>
        <dbReference type="ChEBI" id="CHEBI:30616"/>
    </ligand>
</feature>
<feature type="binding site" evidence="1">
    <location>
        <position position="325"/>
    </location>
    <ligand>
        <name>ATP</name>
        <dbReference type="ChEBI" id="CHEBI:30616"/>
    </ligand>
</feature>
<feature type="binding site" evidence="1">
    <location>
        <position position="397"/>
    </location>
    <ligand>
        <name>ATP</name>
        <dbReference type="ChEBI" id="CHEBI:30616"/>
    </ligand>
</feature>
<protein>
    <recommendedName>
        <fullName evidence="1">ATP-dependent protease ATPase subunit HslU</fullName>
    </recommendedName>
    <alternativeName>
        <fullName evidence="1">Unfoldase HslU</fullName>
    </alternativeName>
</protein>
<evidence type="ECO:0000255" key="1">
    <source>
        <dbReference type="HAMAP-Rule" id="MF_00249"/>
    </source>
</evidence>